<dbReference type="EMBL" id="CP001091">
    <property type="protein sequence ID" value="ACE61672.1"/>
    <property type="molecule type" value="Genomic_DNA"/>
</dbReference>
<dbReference type="RefSeq" id="WP_005617443.1">
    <property type="nucleotide sequence ID" value="NC_010939.1"/>
</dbReference>
<dbReference type="SMR" id="B3GXV7"/>
<dbReference type="KEGG" id="apa:APP7_1020"/>
<dbReference type="HOGENOM" id="CLU_094104_2_0_6"/>
<dbReference type="Proteomes" id="UP000001226">
    <property type="component" value="Chromosome"/>
</dbReference>
<dbReference type="GO" id="GO:0005096">
    <property type="term" value="F:GTPase activator activity"/>
    <property type="evidence" value="ECO:0007669"/>
    <property type="project" value="UniProtKB-KW"/>
</dbReference>
<dbReference type="GO" id="GO:0042254">
    <property type="term" value="P:ribosome biogenesis"/>
    <property type="evidence" value="ECO:0007669"/>
    <property type="project" value="UniProtKB-KW"/>
</dbReference>
<dbReference type="HAMAP" id="MF_01058">
    <property type="entry name" value="GAP_YihI"/>
    <property type="match status" value="1"/>
</dbReference>
<dbReference type="InterPro" id="IPR007336">
    <property type="entry name" value="YihI"/>
</dbReference>
<dbReference type="NCBIfam" id="NF003560">
    <property type="entry name" value="PRK05244.1-1"/>
    <property type="match status" value="1"/>
</dbReference>
<dbReference type="Pfam" id="PF04220">
    <property type="entry name" value="YihI"/>
    <property type="match status" value="1"/>
</dbReference>
<proteinExistence type="inferred from homology"/>
<accession>B3GXV7</accession>
<gene>
    <name evidence="1" type="primary">yihI</name>
    <name type="ordered locus">APP7_1020</name>
</gene>
<protein>
    <recommendedName>
        <fullName evidence="1">Der GTPase-activating protein YihI</fullName>
    </recommendedName>
</protein>
<organism>
    <name type="scientific">Actinobacillus pleuropneumoniae serotype 7 (strain AP76)</name>
    <dbReference type="NCBI Taxonomy" id="537457"/>
    <lineage>
        <taxon>Bacteria</taxon>
        <taxon>Pseudomonadati</taxon>
        <taxon>Pseudomonadota</taxon>
        <taxon>Gammaproteobacteria</taxon>
        <taxon>Pasteurellales</taxon>
        <taxon>Pasteurellaceae</taxon>
        <taxon>Actinobacillus</taxon>
    </lineage>
</organism>
<comment type="function">
    <text evidence="1">A GTPase-activating protein (GAP) that modifies Der/EngA GTPase function. May play a role in ribosome biogenesis.</text>
</comment>
<comment type="subunit">
    <text evidence="1">Interacts with Der.</text>
</comment>
<comment type="similarity">
    <text evidence="1">Belongs to the YihI family.</text>
</comment>
<keyword id="KW-0343">GTPase activation</keyword>
<keyword id="KW-0690">Ribosome biogenesis</keyword>
<evidence type="ECO:0000255" key="1">
    <source>
        <dbReference type="HAMAP-Rule" id="MF_01058"/>
    </source>
</evidence>
<evidence type="ECO:0000256" key="2">
    <source>
        <dbReference type="SAM" id="MobiDB-lite"/>
    </source>
</evidence>
<sequence>MSRTKKTRRITDIMPARKADKKPEQPKLSGGKNRKPTRYELDAKAREEKKKRKHKGLPTGSRNVDPAEQKKAAVKEVKDPRIGSRKKIPLMVEFVNKPEKGQIIKPVAVEEYKPHLSPELELEQLENNEILNQLLDEIEAGKTLSAKDQKFVDECLDRIDELMTELGIQDEDEDNGDALLRQFETMDINQFR</sequence>
<name>YIHI_ACTP7</name>
<reference key="1">
    <citation type="submission" date="2008-06" db="EMBL/GenBank/DDBJ databases">
        <title>Genome and proteome analysis of A. pleuropneumoniae serotype 7.</title>
        <authorList>
            <person name="Linke B."/>
            <person name="Buettner F."/>
            <person name="Martinez-Arias R."/>
            <person name="Goesmann A."/>
            <person name="Baltes N."/>
            <person name="Tegetmeyer H."/>
            <person name="Singh M."/>
            <person name="Gerlach G.F."/>
        </authorList>
    </citation>
    <scope>NUCLEOTIDE SEQUENCE [LARGE SCALE GENOMIC DNA]</scope>
    <source>
        <strain>AP76</strain>
    </source>
</reference>
<feature type="chain" id="PRO_1000136377" description="Der GTPase-activating protein YihI">
    <location>
        <begin position="1"/>
        <end position="192"/>
    </location>
</feature>
<feature type="region of interest" description="Disordered" evidence="2">
    <location>
        <begin position="1"/>
        <end position="80"/>
    </location>
</feature>
<feature type="compositionally biased region" description="Basic and acidic residues" evidence="2">
    <location>
        <begin position="9"/>
        <end position="25"/>
    </location>
</feature>
<feature type="compositionally biased region" description="Basic and acidic residues" evidence="2">
    <location>
        <begin position="37"/>
        <end position="48"/>
    </location>
</feature>
<feature type="compositionally biased region" description="Basic and acidic residues" evidence="2">
    <location>
        <begin position="65"/>
        <end position="80"/>
    </location>
</feature>